<sequence length="417" mass="45514">MDYIKEWILPQDPEVAEAIAQEEQRQRYKIELIASENFVSRAVMAAQGSVLTNKYAEGYPGKRYYGGCEYVDIVEDLARERVKKLFGAEHANVQPHSGAQANTAVYFAMLKPGDTVLGMNLSHGGHLTHGSPVNISGMYYNFVAYGVDQVTERIDYDVVRQLALEHRPKLIVAGASAYPRQIDFARLREIADEADSYFMVDMAHIAGLVAAGLHQNPVPYAHFVTTTTHKTLRGPRGGLILCQEEFAKAIDKAIFPGIQGGPLMHVIAAKAVAFGEALKPEFVEYQKRIVENAKVLSETLAEKGFRIVSGGTDNHLMLVDVRSKGLTGKEAEYILDEVGITVNKNTIPYDPASPMVTSGIRIGTPAVTSRGMDTLAMKKIAAAIDIALSEPNEAGAAKARDMVAALCAEYPLYPNLD</sequence>
<feature type="chain" id="PRO_1000195442" description="Serine hydroxymethyltransferase">
    <location>
        <begin position="1"/>
        <end position="417"/>
    </location>
</feature>
<feature type="binding site" evidence="1">
    <location>
        <position position="121"/>
    </location>
    <ligand>
        <name>(6S)-5,6,7,8-tetrahydrofolate</name>
        <dbReference type="ChEBI" id="CHEBI:57453"/>
    </ligand>
</feature>
<feature type="binding site" evidence="1">
    <location>
        <begin position="125"/>
        <end position="127"/>
    </location>
    <ligand>
        <name>(6S)-5,6,7,8-tetrahydrofolate</name>
        <dbReference type="ChEBI" id="CHEBI:57453"/>
    </ligand>
</feature>
<feature type="binding site" evidence="1">
    <location>
        <position position="245"/>
    </location>
    <ligand>
        <name>(6S)-5,6,7,8-tetrahydrofolate</name>
        <dbReference type="ChEBI" id="CHEBI:57453"/>
    </ligand>
</feature>
<feature type="site" description="Plays an important role in substrate specificity" evidence="1">
    <location>
        <position position="229"/>
    </location>
</feature>
<feature type="modified residue" description="N6-(pyridoxal phosphate)lysine" evidence="1">
    <location>
        <position position="230"/>
    </location>
</feature>
<reference key="1">
    <citation type="journal article" date="2012" name="BMC Microbiol.">
        <title>Genome sequence of Desulfitobacterium hafniense DCB-2, a Gram-positive anaerobe capable of dehalogenation and metal reduction.</title>
        <authorList>
            <person name="Kim S.H."/>
            <person name="Harzman C."/>
            <person name="Davis J.K."/>
            <person name="Hutcheson R."/>
            <person name="Broderick J.B."/>
            <person name="Marsh T.L."/>
            <person name="Tiedje J.M."/>
        </authorList>
    </citation>
    <scope>NUCLEOTIDE SEQUENCE [LARGE SCALE GENOMIC DNA]</scope>
    <source>
        <strain>DSM 10664 / DCB-2</strain>
    </source>
</reference>
<protein>
    <recommendedName>
        <fullName evidence="1">Serine hydroxymethyltransferase</fullName>
        <shortName evidence="1">SHMT</shortName>
        <shortName evidence="1">Serine methylase</shortName>
        <ecNumber evidence="1">2.1.2.1</ecNumber>
    </recommendedName>
</protein>
<comment type="function">
    <text evidence="1">Catalyzes the reversible interconversion of serine and glycine with tetrahydrofolate (THF) serving as the one-carbon carrier. This reaction serves as the major source of one-carbon groups required for the biosynthesis of purines, thymidylate, methionine, and other important biomolecules. Also exhibits THF-independent aldolase activity toward beta-hydroxyamino acids, producing glycine and aldehydes, via a retro-aldol mechanism.</text>
</comment>
<comment type="catalytic activity">
    <reaction evidence="1">
        <text>(6R)-5,10-methylene-5,6,7,8-tetrahydrofolate + glycine + H2O = (6S)-5,6,7,8-tetrahydrofolate + L-serine</text>
        <dbReference type="Rhea" id="RHEA:15481"/>
        <dbReference type="ChEBI" id="CHEBI:15377"/>
        <dbReference type="ChEBI" id="CHEBI:15636"/>
        <dbReference type="ChEBI" id="CHEBI:33384"/>
        <dbReference type="ChEBI" id="CHEBI:57305"/>
        <dbReference type="ChEBI" id="CHEBI:57453"/>
        <dbReference type="EC" id="2.1.2.1"/>
    </reaction>
</comment>
<comment type="cofactor">
    <cofactor evidence="1">
        <name>pyridoxal 5'-phosphate</name>
        <dbReference type="ChEBI" id="CHEBI:597326"/>
    </cofactor>
</comment>
<comment type="pathway">
    <text evidence="1">One-carbon metabolism; tetrahydrofolate interconversion.</text>
</comment>
<comment type="pathway">
    <text evidence="1">Amino-acid biosynthesis; glycine biosynthesis; glycine from L-serine: step 1/1.</text>
</comment>
<comment type="subunit">
    <text evidence="1">Homodimer.</text>
</comment>
<comment type="subcellular location">
    <subcellularLocation>
        <location evidence="1">Cytoplasm</location>
    </subcellularLocation>
</comment>
<comment type="similarity">
    <text evidence="1">Belongs to the SHMT family.</text>
</comment>
<keyword id="KW-0028">Amino-acid biosynthesis</keyword>
<keyword id="KW-0963">Cytoplasm</keyword>
<keyword id="KW-0554">One-carbon metabolism</keyword>
<keyword id="KW-0663">Pyridoxal phosphate</keyword>
<keyword id="KW-0808">Transferase</keyword>
<name>GLYA_DESHD</name>
<gene>
    <name evidence="1" type="primary">glyA</name>
    <name type="ordered locus">Dhaf_4826</name>
</gene>
<accession>B8FZ69</accession>
<organism>
    <name type="scientific">Desulfitobacterium hafniense (strain DSM 10664 / DCB-2)</name>
    <dbReference type="NCBI Taxonomy" id="272564"/>
    <lineage>
        <taxon>Bacteria</taxon>
        <taxon>Bacillati</taxon>
        <taxon>Bacillota</taxon>
        <taxon>Clostridia</taxon>
        <taxon>Eubacteriales</taxon>
        <taxon>Desulfitobacteriaceae</taxon>
        <taxon>Desulfitobacterium</taxon>
    </lineage>
</organism>
<dbReference type="EC" id="2.1.2.1" evidence="1"/>
<dbReference type="EMBL" id="CP001336">
    <property type="protein sequence ID" value="ACL22821.1"/>
    <property type="molecule type" value="Genomic_DNA"/>
</dbReference>
<dbReference type="RefSeq" id="WP_015945493.1">
    <property type="nucleotide sequence ID" value="NC_011830.1"/>
</dbReference>
<dbReference type="SMR" id="B8FZ69"/>
<dbReference type="KEGG" id="dhd:Dhaf_4826"/>
<dbReference type="HOGENOM" id="CLU_022477_2_1_9"/>
<dbReference type="UniPathway" id="UPA00193"/>
<dbReference type="UniPathway" id="UPA00288">
    <property type="reaction ID" value="UER01023"/>
</dbReference>
<dbReference type="Proteomes" id="UP000007726">
    <property type="component" value="Chromosome"/>
</dbReference>
<dbReference type="GO" id="GO:0005829">
    <property type="term" value="C:cytosol"/>
    <property type="evidence" value="ECO:0007669"/>
    <property type="project" value="TreeGrafter"/>
</dbReference>
<dbReference type="GO" id="GO:0004372">
    <property type="term" value="F:glycine hydroxymethyltransferase activity"/>
    <property type="evidence" value="ECO:0007669"/>
    <property type="project" value="UniProtKB-UniRule"/>
</dbReference>
<dbReference type="GO" id="GO:0030170">
    <property type="term" value="F:pyridoxal phosphate binding"/>
    <property type="evidence" value="ECO:0007669"/>
    <property type="project" value="UniProtKB-UniRule"/>
</dbReference>
<dbReference type="GO" id="GO:0019264">
    <property type="term" value="P:glycine biosynthetic process from serine"/>
    <property type="evidence" value="ECO:0007669"/>
    <property type="project" value="UniProtKB-UniRule"/>
</dbReference>
<dbReference type="GO" id="GO:0035999">
    <property type="term" value="P:tetrahydrofolate interconversion"/>
    <property type="evidence" value="ECO:0007669"/>
    <property type="project" value="UniProtKB-UniRule"/>
</dbReference>
<dbReference type="CDD" id="cd00378">
    <property type="entry name" value="SHMT"/>
    <property type="match status" value="1"/>
</dbReference>
<dbReference type="FunFam" id="3.40.640.10:FF:000001">
    <property type="entry name" value="Serine hydroxymethyltransferase"/>
    <property type="match status" value="1"/>
</dbReference>
<dbReference type="FunFam" id="3.90.1150.10:FF:000003">
    <property type="entry name" value="Serine hydroxymethyltransferase"/>
    <property type="match status" value="1"/>
</dbReference>
<dbReference type="Gene3D" id="3.90.1150.10">
    <property type="entry name" value="Aspartate Aminotransferase, domain 1"/>
    <property type="match status" value="1"/>
</dbReference>
<dbReference type="Gene3D" id="3.40.640.10">
    <property type="entry name" value="Type I PLP-dependent aspartate aminotransferase-like (Major domain)"/>
    <property type="match status" value="1"/>
</dbReference>
<dbReference type="HAMAP" id="MF_00051">
    <property type="entry name" value="SHMT"/>
    <property type="match status" value="1"/>
</dbReference>
<dbReference type="InterPro" id="IPR015424">
    <property type="entry name" value="PyrdxlP-dep_Trfase"/>
</dbReference>
<dbReference type="InterPro" id="IPR015421">
    <property type="entry name" value="PyrdxlP-dep_Trfase_major"/>
</dbReference>
<dbReference type="InterPro" id="IPR015422">
    <property type="entry name" value="PyrdxlP-dep_Trfase_small"/>
</dbReference>
<dbReference type="InterPro" id="IPR001085">
    <property type="entry name" value="Ser_HO-MeTrfase"/>
</dbReference>
<dbReference type="InterPro" id="IPR049943">
    <property type="entry name" value="Ser_HO-MeTrfase-like"/>
</dbReference>
<dbReference type="InterPro" id="IPR019798">
    <property type="entry name" value="Ser_HO-MeTrfase_PLP_BS"/>
</dbReference>
<dbReference type="InterPro" id="IPR039429">
    <property type="entry name" value="SHMT-like_dom"/>
</dbReference>
<dbReference type="NCBIfam" id="NF000586">
    <property type="entry name" value="PRK00011.1"/>
    <property type="match status" value="1"/>
</dbReference>
<dbReference type="PANTHER" id="PTHR11680">
    <property type="entry name" value="SERINE HYDROXYMETHYLTRANSFERASE"/>
    <property type="match status" value="1"/>
</dbReference>
<dbReference type="PANTHER" id="PTHR11680:SF35">
    <property type="entry name" value="SERINE HYDROXYMETHYLTRANSFERASE 1"/>
    <property type="match status" value="1"/>
</dbReference>
<dbReference type="Pfam" id="PF00464">
    <property type="entry name" value="SHMT"/>
    <property type="match status" value="1"/>
</dbReference>
<dbReference type="PIRSF" id="PIRSF000412">
    <property type="entry name" value="SHMT"/>
    <property type="match status" value="1"/>
</dbReference>
<dbReference type="SUPFAM" id="SSF53383">
    <property type="entry name" value="PLP-dependent transferases"/>
    <property type="match status" value="1"/>
</dbReference>
<dbReference type="PROSITE" id="PS00096">
    <property type="entry name" value="SHMT"/>
    <property type="match status" value="1"/>
</dbReference>
<proteinExistence type="inferred from homology"/>
<evidence type="ECO:0000255" key="1">
    <source>
        <dbReference type="HAMAP-Rule" id="MF_00051"/>
    </source>
</evidence>